<protein>
    <recommendedName>
        <fullName evidence="3">Neurotrophic factor BDNF precursor form</fullName>
        <shortName>proBDNF</shortName>
    </recommendedName>
    <alternativeName>
        <fullName>Brain-derived neurotrophic factor</fullName>
    </alternativeName>
    <component>
        <recommendedName>
            <fullName>Neurotrophic factor BDNF</fullName>
        </recommendedName>
    </component>
</protein>
<keyword id="KW-0165">Cleavage on pair of basic residues</keyword>
<keyword id="KW-1015">Disulfide bond</keyword>
<keyword id="KW-0325">Glycoprotein</keyword>
<keyword id="KW-0339">Growth factor</keyword>
<keyword id="KW-0964">Secreted</keyword>
<keyword id="KW-0732">Signal</keyword>
<feature type="signal peptide" evidence="2">
    <location>
        <begin position="1" status="less than"/>
        <end position="5"/>
    </location>
</feature>
<feature type="propeptide" id="PRO_0000346668" evidence="1">
    <location>
        <begin position="6"/>
        <end position="114"/>
    </location>
</feature>
<feature type="chain" id="PRO_0000346669" description="Neurotrophic factor BDNF">
    <location>
        <begin position="115"/>
        <end position="223" status="greater than"/>
    </location>
</feature>
<feature type="glycosylation site" description="N-linked (GlcNAc...) asparagine" evidence="2">
    <location>
        <position position="107"/>
    </location>
</feature>
<feature type="disulfide bond" evidence="1">
    <location>
        <begin position="127"/>
        <end position="194"/>
    </location>
</feature>
<feature type="disulfide bond" evidence="1">
    <location>
        <begin position="172"/>
        <end position="223"/>
    </location>
</feature>
<feature type="non-terminal residue">
    <location>
        <position position="1"/>
    </location>
</feature>
<feature type="non-terminal residue">
    <location>
        <position position="223"/>
    </location>
</feature>
<evidence type="ECO:0000250" key="1"/>
<evidence type="ECO:0000255" key="2"/>
<evidence type="ECO:0000305" key="3"/>
<name>BDNF_LICTR</name>
<reference key="1">
    <citation type="journal article" date="2006" name="Mol. Phylogenet. Evol.">
        <title>Dispersal and vicariance: the complex evolutionary history of boid snakes.</title>
        <authorList>
            <person name="Noonan B.P."/>
            <person name="Chippindale P.T."/>
        </authorList>
    </citation>
    <scope>NUCLEOTIDE SEQUENCE [GENOMIC DNA]</scope>
</reference>
<sequence>SCMKAAPMKEVSIRGQGSLAYPGLWTQGNLETLSGPNDATRGLTSLADTFEHVIEELLDEQQVVQPSKENKDADLYSSRVMLSSQVPLEPPLLFLLEEYKNYLDAANMSMRVRRHSDPARRGELSVCDSISEWVTAAEKKTAVDMSGATVTVLEKVPVPKGQLKQYFYETKCSSKGYAKEGCRGIDKRYWNSQCRTTQSYVRALTMDNKKRVGWRFIRIDTSC</sequence>
<proteinExistence type="inferred from homology"/>
<accession>Q1HN31</accession>
<organism>
    <name type="scientific">Lichanura trivirgata</name>
    <name type="common">Rosy boa</name>
    <name type="synonym">Charina trivirgata</name>
    <dbReference type="NCBI Taxonomy" id="51879"/>
    <lineage>
        <taxon>Eukaryota</taxon>
        <taxon>Metazoa</taxon>
        <taxon>Chordata</taxon>
        <taxon>Craniata</taxon>
        <taxon>Vertebrata</taxon>
        <taxon>Euteleostomi</taxon>
        <taxon>Lepidosauria</taxon>
        <taxon>Squamata</taxon>
        <taxon>Bifurcata</taxon>
        <taxon>Unidentata</taxon>
        <taxon>Episquamata</taxon>
        <taxon>Toxicofera</taxon>
        <taxon>Serpentes</taxon>
        <taxon>Henophidia</taxon>
        <taxon>Boidae</taxon>
        <taxon>Erycinae</taxon>
        <taxon>Lichanura</taxon>
    </lineage>
</organism>
<comment type="function">
    <text evidence="1">Promotes the survival of neuronal populations that are all located either in the central nervous system or directly connected to it.</text>
</comment>
<comment type="subcellular location">
    <subcellularLocation>
        <location evidence="1">Secreted</location>
    </subcellularLocation>
</comment>
<comment type="similarity">
    <text evidence="3">Belongs to the NGF-beta family.</text>
</comment>
<gene>
    <name type="primary">BDNF</name>
</gene>
<dbReference type="EMBL" id="DQ465579">
    <property type="protein sequence ID" value="ABF56550.1"/>
    <property type="molecule type" value="Genomic_DNA"/>
</dbReference>
<dbReference type="SMR" id="Q1HN31"/>
<dbReference type="GlyCosmos" id="Q1HN31">
    <property type="glycosylation" value="1 site, No reported glycans"/>
</dbReference>
<dbReference type="GO" id="GO:0030424">
    <property type="term" value="C:axon"/>
    <property type="evidence" value="ECO:0007669"/>
    <property type="project" value="TreeGrafter"/>
</dbReference>
<dbReference type="GO" id="GO:0030425">
    <property type="term" value="C:dendrite"/>
    <property type="evidence" value="ECO:0007669"/>
    <property type="project" value="TreeGrafter"/>
</dbReference>
<dbReference type="GO" id="GO:0005615">
    <property type="term" value="C:extracellular space"/>
    <property type="evidence" value="ECO:0007669"/>
    <property type="project" value="TreeGrafter"/>
</dbReference>
<dbReference type="GO" id="GO:0008021">
    <property type="term" value="C:synaptic vesicle"/>
    <property type="evidence" value="ECO:0007669"/>
    <property type="project" value="TreeGrafter"/>
</dbReference>
<dbReference type="GO" id="GO:0008083">
    <property type="term" value="F:growth factor activity"/>
    <property type="evidence" value="ECO:0007669"/>
    <property type="project" value="UniProtKB-KW"/>
</dbReference>
<dbReference type="GO" id="GO:0005163">
    <property type="term" value="F:nerve growth factor receptor binding"/>
    <property type="evidence" value="ECO:0007669"/>
    <property type="project" value="TreeGrafter"/>
</dbReference>
<dbReference type="GO" id="GO:0007169">
    <property type="term" value="P:cell surface receptor protein tyrosine kinase signaling pathway"/>
    <property type="evidence" value="ECO:0007669"/>
    <property type="project" value="TreeGrafter"/>
</dbReference>
<dbReference type="GO" id="GO:0050804">
    <property type="term" value="P:modulation of chemical synaptic transmission"/>
    <property type="evidence" value="ECO:0007669"/>
    <property type="project" value="TreeGrafter"/>
</dbReference>
<dbReference type="GO" id="GO:0043524">
    <property type="term" value="P:negative regulation of neuron apoptotic process"/>
    <property type="evidence" value="ECO:0007669"/>
    <property type="project" value="TreeGrafter"/>
</dbReference>
<dbReference type="GO" id="GO:0021675">
    <property type="term" value="P:nerve development"/>
    <property type="evidence" value="ECO:0007669"/>
    <property type="project" value="TreeGrafter"/>
</dbReference>
<dbReference type="GO" id="GO:0038180">
    <property type="term" value="P:nerve growth factor signaling pathway"/>
    <property type="evidence" value="ECO:0007669"/>
    <property type="project" value="TreeGrafter"/>
</dbReference>
<dbReference type="GO" id="GO:0048812">
    <property type="term" value="P:neuron projection morphogenesis"/>
    <property type="evidence" value="ECO:0007669"/>
    <property type="project" value="TreeGrafter"/>
</dbReference>
<dbReference type="FunFam" id="2.10.90.10:FF:000002">
    <property type="entry name" value="Brain-derived neurotrophic factor"/>
    <property type="match status" value="1"/>
</dbReference>
<dbReference type="Gene3D" id="2.10.90.10">
    <property type="entry name" value="Cystine-knot cytokines"/>
    <property type="match status" value="1"/>
</dbReference>
<dbReference type="InterPro" id="IPR020430">
    <property type="entry name" value="Brain-der_neurotrophic_factor"/>
</dbReference>
<dbReference type="InterPro" id="IPR029034">
    <property type="entry name" value="Cystine-knot_cytokine"/>
</dbReference>
<dbReference type="InterPro" id="IPR020408">
    <property type="entry name" value="Nerve_growth_factor-like"/>
</dbReference>
<dbReference type="InterPro" id="IPR002072">
    <property type="entry name" value="Nerve_growth_factor-rel"/>
</dbReference>
<dbReference type="InterPro" id="IPR019846">
    <property type="entry name" value="Nerve_growth_factor_CS"/>
</dbReference>
<dbReference type="PANTHER" id="PTHR11589:SF3">
    <property type="entry name" value="BRAIN-DERIVED NEUROTROPHIC FACTOR"/>
    <property type="match status" value="1"/>
</dbReference>
<dbReference type="PANTHER" id="PTHR11589">
    <property type="entry name" value="NERVE GROWTH FACTOR NGF -RELATED"/>
    <property type="match status" value="1"/>
</dbReference>
<dbReference type="Pfam" id="PF00243">
    <property type="entry name" value="NGF"/>
    <property type="match status" value="1"/>
</dbReference>
<dbReference type="PIRSF" id="PIRSF001789">
    <property type="entry name" value="NGF"/>
    <property type="match status" value="1"/>
</dbReference>
<dbReference type="PRINTS" id="PR01912">
    <property type="entry name" value="BDNFACTOR"/>
</dbReference>
<dbReference type="PRINTS" id="PR00268">
    <property type="entry name" value="NGF"/>
</dbReference>
<dbReference type="SMART" id="SM00140">
    <property type="entry name" value="NGF"/>
    <property type="match status" value="1"/>
</dbReference>
<dbReference type="SUPFAM" id="SSF57501">
    <property type="entry name" value="Cystine-knot cytokines"/>
    <property type="match status" value="1"/>
</dbReference>
<dbReference type="PROSITE" id="PS00248">
    <property type="entry name" value="NGF_1"/>
    <property type="match status" value="1"/>
</dbReference>
<dbReference type="PROSITE" id="PS50270">
    <property type="entry name" value="NGF_2"/>
    <property type="match status" value="1"/>
</dbReference>